<name>IXTPA_BIFA0</name>
<gene>
    <name type="ordered locus">BLA_0275</name>
</gene>
<accession>B8DVS6</accession>
<evidence type="ECO:0000255" key="1">
    <source>
        <dbReference type="HAMAP-Rule" id="MF_01405"/>
    </source>
</evidence>
<proteinExistence type="inferred from homology"/>
<reference key="1">
    <citation type="journal article" date="2009" name="J. Bacteriol.">
        <title>Genome sequence of the probiotic bacterium Bifidobacterium animalis subsp. lactis AD011.</title>
        <authorList>
            <person name="Kim J.F."/>
            <person name="Jeong H."/>
            <person name="Yu D.S."/>
            <person name="Choi S.-H."/>
            <person name="Hur C.-G."/>
            <person name="Park M.-S."/>
            <person name="Yoon S.H."/>
            <person name="Kim D.-W."/>
            <person name="Ji G.E."/>
            <person name="Park H.-S."/>
            <person name="Oh T.K."/>
        </authorList>
    </citation>
    <scope>NUCLEOTIDE SEQUENCE [LARGE SCALE GENOMIC DNA]</scope>
    <source>
        <strain>AD011</strain>
    </source>
</reference>
<protein>
    <recommendedName>
        <fullName evidence="1">dITP/XTP pyrophosphatase</fullName>
        <ecNumber evidence="1">3.6.1.66</ecNumber>
    </recommendedName>
    <alternativeName>
        <fullName evidence="1">Non-canonical purine NTP pyrophosphatase</fullName>
    </alternativeName>
    <alternativeName>
        <fullName evidence="1">Non-standard purine NTP pyrophosphatase</fullName>
    </alternativeName>
    <alternativeName>
        <fullName evidence="1">Nucleoside-triphosphate diphosphatase</fullName>
    </alternativeName>
    <alternativeName>
        <fullName evidence="1">Nucleoside-triphosphate pyrophosphatase</fullName>
        <shortName evidence="1">NTPase</shortName>
    </alternativeName>
</protein>
<sequence length="239" mass="25227">MNIVVATHNEGKLVEIRDILAEEFGDGAHDIELVSAGSLGLPDPVETGITFEANALLKARFVARLTGLPAIADDSGLIVDVMGNAPGILSARWAGEHGNDAANIDLLLAQIEDIPDDDRTARFRCAAALVVPIAAEEDVADFEADPSDGMDDGDGLVDARETVVLGEMPGTIVRHPHGSNGFGYDPIFMPDEQPAGAEESGELLTSAEMTPEQKNAISHRGKALRALMPAIRELVETGE</sequence>
<comment type="function">
    <text evidence="1">Pyrophosphatase that catalyzes the hydrolysis of nucleoside triphosphates to their monophosphate derivatives, with a high preference for the non-canonical purine nucleotides XTP (xanthosine triphosphate), dITP (deoxyinosine triphosphate) and ITP. Seems to function as a house-cleaning enzyme that removes non-canonical purine nucleotides from the nucleotide pool, thus preventing their incorporation into DNA/RNA and avoiding chromosomal lesions.</text>
</comment>
<comment type="catalytic activity">
    <reaction evidence="1">
        <text>XTP + H2O = XMP + diphosphate + H(+)</text>
        <dbReference type="Rhea" id="RHEA:28610"/>
        <dbReference type="ChEBI" id="CHEBI:15377"/>
        <dbReference type="ChEBI" id="CHEBI:15378"/>
        <dbReference type="ChEBI" id="CHEBI:33019"/>
        <dbReference type="ChEBI" id="CHEBI:57464"/>
        <dbReference type="ChEBI" id="CHEBI:61314"/>
        <dbReference type="EC" id="3.6.1.66"/>
    </reaction>
</comment>
<comment type="catalytic activity">
    <reaction evidence="1">
        <text>dITP + H2O = dIMP + diphosphate + H(+)</text>
        <dbReference type="Rhea" id="RHEA:28342"/>
        <dbReference type="ChEBI" id="CHEBI:15377"/>
        <dbReference type="ChEBI" id="CHEBI:15378"/>
        <dbReference type="ChEBI" id="CHEBI:33019"/>
        <dbReference type="ChEBI" id="CHEBI:61194"/>
        <dbReference type="ChEBI" id="CHEBI:61382"/>
        <dbReference type="EC" id="3.6.1.66"/>
    </reaction>
</comment>
<comment type="catalytic activity">
    <reaction evidence="1">
        <text>ITP + H2O = IMP + diphosphate + H(+)</text>
        <dbReference type="Rhea" id="RHEA:29399"/>
        <dbReference type="ChEBI" id="CHEBI:15377"/>
        <dbReference type="ChEBI" id="CHEBI:15378"/>
        <dbReference type="ChEBI" id="CHEBI:33019"/>
        <dbReference type="ChEBI" id="CHEBI:58053"/>
        <dbReference type="ChEBI" id="CHEBI:61402"/>
        <dbReference type="EC" id="3.6.1.66"/>
    </reaction>
</comment>
<comment type="cofactor">
    <cofactor evidence="1">
        <name>Mg(2+)</name>
        <dbReference type="ChEBI" id="CHEBI:18420"/>
    </cofactor>
    <text evidence="1">Binds 1 Mg(2+) ion per subunit.</text>
</comment>
<comment type="subunit">
    <text evidence="1">Homodimer.</text>
</comment>
<comment type="similarity">
    <text evidence="1">Belongs to the HAM1 NTPase family.</text>
</comment>
<feature type="chain" id="PRO_1000184577" description="dITP/XTP pyrophosphatase">
    <location>
        <begin position="1"/>
        <end position="239"/>
    </location>
</feature>
<feature type="active site" description="Proton acceptor" evidence="1">
    <location>
        <position position="74"/>
    </location>
</feature>
<feature type="binding site" evidence="1">
    <location>
        <begin position="7"/>
        <end position="12"/>
    </location>
    <ligand>
        <name>substrate</name>
    </ligand>
</feature>
<feature type="binding site" evidence="1">
    <location>
        <position position="74"/>
    </location>
    <ligand>
        <name>Mg(2+)</name>
        <dbReference type="ChEBI" id="CHEBI:18420"/>
    </ligand>
</feature>
<feature type="binding site" evidence="1">
    <location>
        <position position="75"/>
    </location>
    <ligand>
        <name>substrate</name>
    </ligand>
</feature>
<feature type="binding site" evidence="1">
    <location>
        <begin position="182"/>
        <end position="185"/>
    </location>
    <ligand>
        <name>substrate</name>
    </ligand>
</feature>
<feature type="binding site" evidence="1">
    <location>
        <position position="214"/>
    </location>
    <ligand>
        <name>substrate</name>
    </ligand>
</feature>
<feature type="binding site" evidence="1">
    <location>
        <begin position="219"/>
        <end position="220"/>
    </location>
    <ligand>
        <name>substrate</name>
    </ligand>
</feature>
<organism>
    <name type="scientific">Bifidobacterium animalis subsp. lactis (strain AD011)</name>
    <dbReference type="NCBI Taxonomy" id="442563"/>
    <lineage>
        <taxon>Bacteria</taxon>
        <taxon>Bacillati</taxon>
        <taxon>Actinomycetota</taxon>
        <taxon>Actinomycetes</taxon>
        <taxon>Bifidobacteriales</taxon>
        <taxon>Bifidobacteriaceae</taxon>
        <taxon>Bifidobacterium</taxon>
    </lineage>
</organism>
<dbReference type="EC" id="3.6.1.66" evidence="1"/>
<dbReference type="EMBL" id="CP001213">
    <property type="protein sequence ID" value="ACL28577.1"/>
    <property type="molecule type" value="Genomic_DNA"/>
</dbReference>
<dbReference type="RefSeq" id="WP_004268398.1">
    <property type="nucleotide sequence ID" value="NC_011835.1"/>
</dbReference>
<dbReference type="SMR" id="B8DVS6"/>
<dbReference type="STRING" id="442563.BLA_0275"/>
<dbReference type="KEGG" id="bla:BLA_0275"/>
<dbReference type="HOGENOM" id="CLU_082080_0_1_11"/>
<dbReference type="Proteomes" id="UP000002456">
    <property type="component" value="Chromosome"/>
</dbReference>
<dbReference type="GO" id="GO:0005829">
    <property type="term" value="C:cytosol"/>
    <property type="evidence" value="ECO:0007669"/>
    <property type="project" value="TreeGrafter"/>
</dbReference>
<dbReference type="GO" id="GO:0035870">
    <property type="term" value="F:dITP diphosphatase activity"/>
    <property type="evidence" value="ECO:0007669"/>
    <property type="project" value="RHEA"/>
</dbReference>
<dbReference type="GO" id="GO:0036220">
    <property type="term" value="F:ITP diphosphatase activity"/>
    <property type="evidence" value="ECO:0007669"/>
    <property type="project" value="UniProtKB-EC"/>
</dbReference>
<dbReference type="GO" id="GO:0046872">
    <property type="term" value="F:metal ion binding"/>
    <property type="evidence" value="ECO:0007669"/>
    <property type="project" value="UniProtKB-KW"/>
</dbReference>
<dbReference type="GO" id="GO:0000166">
    <property type="term" value="F:nucleotide binding"/>
    <property type="evidence" value="ECO:0007669"/>
    <property type="project" value="UniProtKB-KW"/>
</dbReference>
<dbReference type="GO" id="GO:0017111">
    <property type="term" value="F:ribonucleoside triphosphate phosphatase activity"/>
    <property type="evidence" value="ECO:0007669"/>
    <property type="project" value="InterPro"/>
</dbReference>
<dbReference type="GO" id="GO:0036222">
    <property type="term" value="F:XTP diphosphatase activity"/>
    <property type="evidence" value="ECO:0007669"/>
    <property type="project" value="RHEA"/>
</dbReference>
<dbReference type="GO" id="GO:0009117">
    <property type="term" value="P:nucleotide metabolic process"/>
    <property type="evidence" value="ECO:0007669"/>
    <property type="project" value="UniProtKB-KW"/>
</dbReference>
<dbReference type="GO" id="GO:0009146">
    <property type="term" value="P:purine nucleoside triphosphate catabolic process"/>
    <property type="evidence" value="ECO:0007669"/>
    <property type="project" value="UniProtKB-UniRule"/>
</dbReference>
<dbReference type="CDD" id="cd00515">
    <property type="entry name" value="HAM1"/>
    <property type="match status" value="1"/>
</dbReference>
<dbReference type="Gene3D" id="3.90.950.10">
    <property type="match status" value="1"/>
</dbReference>
<dbReference type="HAMAP" id="MF_01405">
    <property type="entry name" value="Non_canon_purine_NTPase"/>
    <property type="match status" value="1"/>
</dbReference>
<dbReference type="InterPro" id="IPR020922">
    <property type="entry name" value="dITP/XTP_pyrophosphatase"/>
</dbReference>
<dbReference type="InterPro" id="IPR029001">
    <property type="entry name" value="ITPase-like_fam"/>
</dbReference>
<dbReference type="InterPro" id="IPR002637">
    <property type="entry name" value="RdgB/HAM1"/>
</dbReference>
<dbReference type="PANTHER" id="PTHR11067:SF9">
    <property type="entry name" value="INOSINE TRIPHOSPHATE PYROPHOSPHATASE"/>
    <property type="match status" value="1"/>
</dbReference>
<dbReference type="PANTHER" id="PTHR11067">
    <property type="entry name" value="INOSINE TRIPHOSPHATE PYROPHOSPHATASE/HAM1 PROTEIN"/>
    <property type="match status" value="1"/>
</dbReference>
<dbReference type="Pfam" id="PF01725">
    <property type="entry name" value="Ham1p_like"/>
    <property type="match status" value="1"/>
</dbReference>
<dbReference type="SUPFAM" id="SSF52972">
    <property type="entry name" value="ITPase-like"/>
    <property type="match status" value="1"/>
</dbReference>
<keyword id="KW-0378">Hydrolase</keyword>
<keyword id="KW-0460">Magnesium</keyword>
<keyword id="KW-0479">Metal-binding</keyword>
<keyword id="KW-0546">Nucleotide metabolism</keyword>
<keyword id="KW-0547">Nucleotide-binding</keyword>
<keyword id="KW-1185">Reference proteome</keyword>